<dbReference type="EMBL" id="CR860441">
    <property type="protein sequence ID" value="CAH92565.1"/>
    <property type="molecule type" value="mRNA"/>
</dbReference>
<dbReference type="RefSeq" id="NP_001128985.1">
    <property type="nucleotide sequence ID" value="NM_001135513.1"/>
</dbReference>
<dbReference type="SMR" id="Q5R6P5"/>
<dbReference type="FunCoup" id="Q5R6P5">
    <property type="interactions" value="2652"/>
</dbReference>
<dbReference type="STRING" id="9601.ENSPPYP00000017124"/>
<dbReference type="Ensembl" id="ENSPPYT00000017819.2">
    <property type="protein sequence ID" value="ENSPPYP00000017124.1"/>
    <property type="gene ID" value="ENSPPYG00000015330.3"/>
</dbReference>
<dbReference type="GeneID" id="100190825"/>
<dbReference type="KEGG" id="pon:100190825"/>
<dbReference type="CTD" id="84246"/>
<dbReference type="eggNOG" id="KOG3046">
    <property type="taxonomic scope" value="Eukaryota"/>
</dbReference>
<dbReference type="GeneTree" id="ENSGT00390000014501"/>
<dbReference type="HOGENOM" id="CLU_096169_3_0_1"/>
<dbReference type="InParanoid" id="Q5R6P5"/>
<dbReference type="OMA" id="QYQRAKM"/>
<dbReference type="OrthoDB" id="337270at2759"/>
<dbReference type="TreeFam" id="TF315096"/>
<dbReference type="Proteomes" id="UP000001595">
    <property type="component" value="Chromosome 5"/>
</dbReference>
<dbReference type="GO" id="GO:0070847">
    <property type="term" value="C:core mediator complex"/>
    <property type="evidence" value="ECO:0007669"/>
    <property type="project" value="Ensembl"/>
</dbReference>
<dbReference type="GO" id="GO:0016592">
    <property type="term" value="C:mediator complex"/>
    <property type="evidence" value="ECO:0007669"/>
    <property type="project" value="Ensembl"/>
</dbReference>
<dbReference type="GO" id="GO:0005654">
    <property type="term" value="C:nucleoplasm"/>
    <property type="evidence" value="ECO:0007669"/>
    <property type="project" value="Ensembl"/>
</dbReference>
<dbReference type="GO" id="GO:0003712">
    <property type="term" value="F:transcription coregulator activity"/>
    <property type="evidence" value="ECO:0007669"/>
    <property type="project" value="InterPro"/>
</dbReference>
<dbReference type="GO" id="GO:0045944">
    <property type="term" value="P:positive regulation of transcription by RNA polymerase II"/>
    <property type="evidence" value="ECO:0007669"/>
    <property type="project" value="Ensembl"/>
</dbReference>
<dbReference type="GO" id="GO:0035019">
    <property type="term" value="P:somatic stem cell population maintenance"/>
    <property type="evidence" value="ECO:0007669"/>
    <property type="project" value="Ensembl"/>
</dbReference>
<dbReference type="InterPro" id="IPR019145">
    <property type="entry name" value="Mediator_Med10"/>
</dbReference>
<dbReference type="PANTHER" id="PTHR13345">
    <property type="entry name" value="MEDIATOR OF RNA POLYMERASE II TRANSCRIPTION SUBUNIT 10"/>
    <property type="match status" value="1"/>
</dbReference>
<dbReference type="PANTHER" id="PTHR13345:SF13">
    <property type="entry name" value="MEDIATOR OF RNA POLYMERASE II TRANSCRIPTION SUBUNIT 10"/>
    <property type="match status" value="1"/>
</dbReference>
<dbReference type="Pfam" id="PF09748">
    <property type="entry name" value="Med10"/>
    <property type="match status" value="1"/>
</dbReference>
<feature type="chain" id="PRO_0000303154" description="Mediator of RNA polymerase II transcription subunit 10">
    <location>
        <begin position="1"/>
        <end position="135"/>
    </location>
</feature>
<keyword id="KW-0010">Activator</keyword>
<keyword id="KW-0539">Nucleus</keyword>
<keyword id="KW-1185">Reference proteome</keyword>
<keyword id="KW-0804">Transcription</keyword>
<keyword id="KW-0805">Transcription regulation</keyword>
<comment type="function">
    <text evidence="1">Component of the Mediator complex, a coactivator involved in the regulated transcription of nearly all RNA polymerase II-dependent genes. Mediator functions as a bridge to convey information from gene-specific regulatory proteins to the basal RNA polymerase II transcription machinery. Mediator is recruited to promoters by direct interactions with regulatory proteins and serves as a scaffold for the assembly of a functional preinitiation complex with RNA polymerase II and the general transcription factors (By similarity).</text>
</comment>
<comment type="subunit">
    <text evidence="1">Component of the Mediator complex, which is composed of MED1, MED4, MED6, MED7, MED8, MED9, MED10, MED11, MED12, MED13, MED13L, MED14, MED15, MED16, MED17, MED18, MED19, MED20, MED21, MED22, MED23, MED24, MED25, MED26, MED27, MED29, MED30, MED31, CCNC, CDK8 and CDC2L6/CDK11. The MED12, MED13, CCNC and CDK8 subunits form a distinct module termed the CDK8 module. Mediator containing the CDK8 module is less active than Mediator lacking this module in supporting transcriptional activation. Individual preparations of the Mediator complex lacking one or more distinct subunits have been variously termed ARC, CRSP, DRIP, PC2, SMCC and TRAP (By similarity).</text>
</comment>
<comment type="subcellular location">
    <subcellularLocation>
        <location evidence="2">Nucleus</location>
    </subcellularLocation>
</comment>
<comment type="similarity">
    <text evidence="2">Belongs to the Mediator complex subunit 10 family.</text>
</comment>
<sequence>MAEKFDHLEEHLEKFVENIRQLGIIVSDFQPSSQAGLNQKLNFIVTGLQDIDKCRQQLHDITVPLEVFEYIDQGRNPQLYTKECLERALAKNEQVKGKIDTMKKFKSLLIQELSKVFPEDMAKYRSIRGEDHPPS</sequence>
<protein>
    <recommendedName>
        <fullName>Mediator of RNA polymerase II transcription subunit 10</fullName>
    </recommendedName>
    <alternativeName>
        <fullName>Mediator complex subunit 10</fullName>
    </alternativeName>
</protein>
<evidence type="ECO:0000250" key="1"/>
<evidence type="ECO:0000305" key="2"/>
<reference key="1">
    <citation type="submission" date="2004-11" db="EMBL/GenBank/DDBJ databases">
        <authorList>
            <consortium name="The German cDNA consortium"/>
        </authorList>
    </citation>
    <scope>NUCLEOTIDE SEQUENCE [LARGE SCALE MRNA]</scope>
    <source>
        <tissue>Brain cortex</tissue>
    </source>
</reference>
<accession>Q5R6P5</accession>
<proteinExistence type="evidence at transcript level"/>
<name>MED10_PONAB</name>
<organism>
    <name type="scientific">Pongo abelii</name>
    <name type="common">Sumatran orangutan</name>
    <name type="synonym">Pongo pygmaeus abelii</name>
    <dbReference type="NCBI Taxonomy" id="9601"/>
    <lineage>
        <taxon>Eukaryota</taxon>
        <taxon>Metazoa</taxon>
        <taxon>Chordata</taxon>
        <taxon>Craniata</taxon>
        <taxon>Vertebrata</taxon>
        <taxon>Euteleostomi</taxon>
        <taxon>Mammalia</taxon>
        <taxon>Eutheria</taxon>
        <taxon>Euarchontoglires</taxon>
        <taxon>Primates</taxon>
        <taxon>Haplorrhini</taxon>
        <taxon>Catarrhini</taxon>
        <taxon>Hominidae</taxon>
        <taxon>Pongo</taxon>
    </lineage>
</organism>
<gene>
    <name type="primary">MED10</name>
</gene>